<protein>
    <recommendedName>
        <fullName evidence="1">Ribosomal RNA large subunit methyltransferase E</fullName>
        <ecNumber evidence="1">2.1.1.166</ecNumber>
    </recommendedName>
    <alternativeName>
        <fullName evidence="1">23S rRNA Um2552 methyltransferase</fullName>
    </alternativeName>
    <alternativeName>
        <fullName evidence="1">rRNA (uridine-2'-O-)-methyltransferase</fullName>
    </alternativeName>
</protein>
<name>RLME_SHESM</name>
<feature type="chain" id="PRO_0000282798" description="Ribosomal RNA large subunit methyltransferase E">
    <location>
        <begin position="1"/>
        <end position="209"/>
    </location>
</feature>
<feature type="active site" description="Proton acceptor" evidence="1">
    <location>
        <position position="164"/>
    </location>
</feature>
<feature type="binding site" evidence="1">
    <location>
        <position position="63"/>
    </location>
    <ligand>
        <name>S-adenosyl-L-methionine</name>
        <dbReference type="ChEBI" id="CHEBI:59789"/>
    </ligand>
</feature>
<feature type="binding site" evidence="1">
    <location>
        <position position="65"/>
    </location>
    <ligand>
        <name>S-adenosyl-L-methionine</name>
        <dbReference type="ChEBI" id="CHEBI:59789"/>
    </ligand>
</feature>
<feature type="binding site" evidence="1">
    <location>
        <position position="83"/>
    </location>
    <ligand>
        <name>S-adenosyl-L-methionine</name>
        <dbReference type="ChEBI" id="CHEBI:59789"/>
    </ligand>
</feature>
<feature type="binding site" evidence="1">
    <location>
        <position position="99"/>
    </location>
    <ligand>
        <name>S-adenosyl-L-methionine</name>
        <dbReference type="ChEBI" id="CHEBI:59789"/>
    </ligand>
</feature>
<feature type="binding site" evidence="1">
    <location>
        <position position="124"/>
    </location>
    <ligand>
        <name>S-adenosyl-L-methionine</name>
        <dbReference type="ChEBI" id="CHEBI:59789"/>
    </ligand>
</feature>
<comment type="function">
    <text evidence="1">Specifically methylates the uridine in position 2552 of 23S rRNA at the 2'-O position of the ribose in the fully assembled 50S ribosomal subunit.</text>
</comment>
<comment type="catalytic activity">
    <reaction evidence="1">
        <text>uridine(2552) in 23S rRNA + S-adenosyl-L-methionine = 2'-O-methyluridine(2552) in 23S rRNA + S-adenosyl-L-homocysteine + H(+)</text>
        <dbReference type="Rhea" id="RHEA:42720"/>
        <dbReference type="Rhea" id="RHEA-COMP:10202"/>
        <dbReference type="Rhea" id="RHEA-COMP:10203"/>
        <dbReference type="ChEBI" id="CHEBI:15378"/>
        <dbReference type="ChEBI" id="CHEBI:57856"/>
        <dbReference type="ChEBI" id="CHEBI:59789"/>
        <dbReference type="ChEBI" id="CHEBI:65315"/>
        <dbReference type="ChEBI" id="CHEBI:74478"/>
        <dbReference type="EC" id="2.1.1.166"/>
    </reaction>
</comment>
<comment type="subcellular location">
    <subcellularLocation>
        <location evidence="1">Cytoplasm</location>
    </subcellularLocation>
</comment>
<comment type="similarity">
    <text evidence="1">Belongs to the class I-like SAM-binding methyltransferase superfamily. RNA methyltransferase RlmE family.</text>
</comment>
<evidence type="ECO:0000255" key="1">
    <source>
        <dbReference type="HAMAP-Rule" id="MF_01547"/>
    </source>
</evidence>
<proteinExistence type="inferred from homology"/>
<reference key="1">
    <citation type="submission" date="2006-08" db="EMBL/GenBank/DDBJ databases">
        <title>Complete sequence of Shewanella sp. MR-4.</title>
        <authorList>
            <consortium name="US DOE Joint Genome Institute"/>
            <person name="Copeland A."/>
            <person name="Lucas S."/>
            <person name="Lapidus A."/>
            <person name="Barry K."/>
            <person name="Detter J.C."/>
            <person name="Glavina del Rio T."/>
            <person name="Hammon N."/>
            <person name="Israni S."/>
            <person name="Dalin E."/>
            <person name="Tice H."/>
            <person name="Pitluck S."/>
            <person name="Kiss H."/>
            <person name="Brettin T."/>
            <person name="Bruce D."/>
            <person name="Han C."/>
            <person name="Tapia R."/>
            <person name="Gilna P."/>
            <person name="Schmutz J."/>
            <person name="Larimer F."/>
            <person name="Land M."/>
            <person name="Hauser L."/>
            <person name="Kyrpides N."/>
            <person name="Mikhailova N."/>
            <person name="Nealson K."/>
            <person name="Konstantinidis K."/>
            <person name="Klappenbach J."/>
            <person name="Tiedje J."/>
            <person name="Richardson P."/>
        </authorList>
    </citation>
    <scope>NUCLEOTIDE SEQUENCE [LARGE SCALE GENOMIC DNA]</scope>
    <source>
        <strain>MR-4</strain>
    </source>
</reference>
<organism>
    <name type="scientific">Shewanella sp. (strain MR-4)</name>
    <dbReference type="NCBI Taxonomy" id="60480"/>
    <lineage>
        <taxon>Bacteria</taxon>
        <taxon>Pseudomonadati</taxon>
        <taxon>Pseudomonadota</taxon>
        <taxon>Gammaproteobacteria</taxon>
        <taxon>Alteromonadales</taxon>
        <taxon>Shewanellaceae</taxon>
        <taxon>Shewanella</taxon>
    </lineage>
</organism>
<accession>Q0HLG9</accession>
<sequence length="209" mass="23140">MSGKKRTASSTRWMQEHFDDHYVKLAQKRGLRSRAAFKLEELQEKDQLIRPGMTVVDLGAAPGGWSQIAVKLTGDKGKVIACDILPMDPIVGVDFLQGDFREEKVLEALLTRVGADKVDVVLSDMAPNMSGSDGVDQPRAMYLVELALDMCHQVLAPNGSFAVKVFQGEGFDEYMKAVKDAFKVVKTRKPDSSRARSREVYLVATGYKL</sequence>
<dbReference type="EC" id="2.1.1.166" evidence="1"/>
<dbReference type="EMBL" id="CP000446">
    <property type="protein sequence ID" value="ABI38098.1"/>
    <property type="molecule type" value="Genomic_DNA"/>
</dbReference>
<dbReference type="RefSeq" id="WP_011621809.1">
    <property type="nucleotide sequence ID" value="NC_008321.1"/>
</dbReference>
<dbReference type="SMR" id="Q0HLG9"/>
<dbReference type="GeneID" id="94727011"/>
<dbReference type="KEGG" id="she:Shewmr4_1018"/>
<dbReference type="HOGENOM" id="CLU_009422_4_0_6"/>
<dbReference type="GO" id="GO:0005737">
    <property type="term" value="C:cytoplasm"/>
    <property type="evidence" value="ECO:0007669"/>
    <property type="project" value="UniProtKB-SubCell"/>
</dbReference>
<dbReference type="GO" id="GO:0008650">
    <property type="term" value="F:rRNA (uridine-2'-O-)-methyltransferase activity"/>
    <property type="evidence" value="ECO:0007669"/>
    <property type="project" value="UniProtKB-UniRule"/>
</dbReference>
<dbReference type="FunFam" id="3.40.50.150:FF:000005">
    <property type="entry name" value="Ribosomal RNA large subunit methyltransferase E"/>
    <property type="match status" value="1"/>
</dbReference>
<dbReference type="Gene3D" id="3.40.50.150">
    <property type="entry name" value="Vaccinia Virus protein VP39"/>
    <property type="match status" value="1"/>
</dbReference>
<dbReference type="HAMAP" id="MF_01547">
    <property type="entry name" value="RNA_methyltr_E"/>
    <property type="match status" value="1"/>
</dbReference>
<dbReference type="InterPro" id="IPR050082">
    <property type="entry name" value="RNA_methyltr_RlmE"/>
</dbReference>
<dbReference type="InterPro" id="IPR002877">
    <property type="entry name" value="RNA_MeTrfase_FtsJ_dom"/>
</dbReference>
<dbReference type="InterPro" id="IPR015507">
    <property type="entry name" value="rRNA-MeTfrase_E"/>
</dbReference>
<dbReference type="InterPro" id="IPR029063">
    <property type="entry name" value="SAM-dependent_MTases_sf"/>
</dbReference>
<dbReference type="NCBIfam" id="NF008390">
    <property type="entry name" value="PRK11188.1"/>
    <property type="match status" value="1"/>
</dbReference>
<dbReference type="PANTHER" id="PTHR10920">
    <property type="entry name" value="RIBOSOMAL RNA METHYLTRANSFERASE"/>
    <property type="match status" value="1"/>
</dbReference>
<dbReference type="PANTHER" id="PTHR10920:SF18">
    <property type="entry name" value="RRNA METHYLTRANSFERASE 2, MITOCHONDRIAL"/>
    <property type="match status" value="1"/>
</dbReference>
<dbReference type="Pfam" id="PF01728">
    <property type="entry name" value="FtsJ"/>
    <property type="match status" value="1"/>
</dbReference>
<dbReference type="PIRSF" id="PIRSF005461">
    <property type="entry name" value="23S_rRNA_mtase"/>
    <property type="match status" value="1"/>
</dbReference>
<dbReference type="SUPFAM" id="SSF53335">
    <property type="entry name" value="S-adenosyl-L-methionine-dependent methyltransferases"/>
    <property type="match status" value="1"/>
</dbReference>
<gene>
    <name evidence="1" type="primary">rlmE</name>
    <name evidence="1" type="synonym">ftsJ</name>
    <name evidence="1" type="synonym">rrmJ</name>
    <name type="ordered locus">Shewmr4_1018</name>
</gene>
<keyword id="KW-0963">Cytoplasm</keyword>
<keyword id="KW-0489">Methyltransferase</keyword>
<keyword id="KW-0698">rRNA processing</keyword>
<keyword id="KW-0949">S-adenosyl-L-methionine</keyword>
<keyword id="KW-0808">Transferase</keyword>